<keyword id="KW-0256">Endoplasmic reticulum</keyword>
<keyword id="KW-0325">Glycoprotein</keyword>
<keyword id="KW-0378">Hydrolase</keyword>
<keyword id="KW-0472">Membrane</keyword>
<keyword id="KW-0479">Metal-binding</keyword>
<keyword id="KW-0482">Metalloprotease</keyword>
<keyword id="KW-0645">Protease</keyword>
<keyword id="KW-1185">Reference proteome</keyword>
<keyword id="KW-0812">Transmembrane</keyword>
<keyword id="KW-1133">Transmembrane helix</keyword>
<keyword id="KW-0862">Zinc</keyword>
<comment type="cofactor">
    <cofactor evidence="1">
        <name>Zn(2+)</name>
        <dbReference type="ChEBI" id="CHEBI:29105"/>
    </cofactor>
    <text evidence="1">Binds 2 Zn(2+) ions per subunit.</text>
</comment>
<comment type="subcellular location">
    <subcellularLocation>
        <location evidence="2">Endoplasmic reticulum membrane</location>
        <topology evidence="3">Multi-pass membrane protein</topology>
    </subcellularLocation>
</comment>
<comment type="similarity">
    <text evidence="5">Belongs to the peptidase M28 family. M28B subfamily.</text>
</comment>
<accession>O94702</accession>
<gene>
    <name evidence="6" type="primary">erm1</name>
    <name evidence="6" type="ORF">SPCC1259.02c</name>
</gene>
<sequence length="822" mass="91843">MVLVCASSSKCKRNTFLQLAMVLFAVVMARIALYFHNHLDEPLVDPYDANGNPQFSEANALKHVIHLSDDIGYRILGTIEQERAREYIMNEVLALQKQLQDGPNADIHQMEVSLESGDGAHRFDFMNKYVIKKYQNLKNIVVRLSNGTEACKEEAVLINAHVDSTLPSPGATDDALAVAILLEAIRIFISRPVPLTHSIVFLFNDAEESLQDASHMFITQSPLRDTIKCVVNLEACGTTGSEILFQATSNEMIKAYSHVPHPFGTVLADDVFRTGLILSDTDFRQFVQYGNLTGLDMAVVKNSYLYHTKKDLAPYISPGTPQNFGENILAILTYLVSPEADLNNMKSSGTVYFSVFNSLFFMYSKLTSKILNTLVGGLGILLTLRGSEGSFTVALIAQVISIAGIFVIPNIWAYILGNVLDCGMSWFRNEYWPLFIYLPAIFASLFFTESLFKRSEHLALRATIFIFSLLTFIPLPSAYLFTIIDFFMVFALFLNDKILAKPGTVHPLTYFIGSIGAMTVGFESAINLLEIFVPLTGRIGTDKVADNVVATVCVCGFNIYFPLMSPWIQRFRSRCCFRLGLLFSIFVVGFSSFILAKQDTYYDSLHPRRIFVQRMENITSNEVSLHIASADSAPGFDKLSSDLSSLLTDEPVVKTEMDDWNSDWDTVYPFSQFLGSYRIPLNDTVDVTTLPSIKFSNKVVKDNVVNVTVTVEHPGLIWTVVSFDADVLSWSLPEVPSTVRRHHVREVSAYGLDSYSFNMSYLEAPIYFDFVGVDGVGHYPSKASEGRDRASIQLCEKLTNDYLPDWTDTLCIGVVSGNFKLE</sequence>
<reference key="1">
    <citation type="journal article" date="2002" name="Nature">
        <title>The genome sequence of Schizosaccharomyces pombe.</title>
        <authorList>
            <person name="Wood V."/>
            <person name="Gwilliam R."/>
            <person name="Rajandream M.A."/>
            <person name="Lyne M.H."/>
            <person name="Lyne R."/>
            <person name="Stewart A."/>
            <person name="Sgouros J.G."/>
            <person name="Peat N."/>
            <person name="Hayles J."/>
            <person name="Baker S.G."/>
            <person name="Basham D."/>
            <person name="Bowman S."/>
            <person name="Brooks K."/>
            <person name="Brown D."/>
            <person name="Brown S."/>
            <person name="Chillingworth T."/>
            <person name="Churcher C.M."/>
            <person name="Collins M."/>
            <person name="Connor R."/>
            <person name="Cronin A."/>
            <person name="Davis P."/>
            <person name="Feltwell T."/>
            <person name="Fraser A."/>
            <person name="Gentles S."/>
            <person name="Goble A."/>
            <person name="Hamlin N."/>
            <person name="Harris D.E."/>
            <person name="Hidalgo J."/>
            <person name="Hodgson G."/>
            <person name="Holroyd S."/>
            <person name="Hornsby T."/>
            <person name="Howarth S."/>
            <person name="Huckle E.J."/>
            <person name="Hunt S."/>
            <person name="Jagels K."/>
            <person name="James K.D."/>
            <person name="Jones L."/>
            <person name="Jones M."/>
            <person name="Leather S."/>
            <person name="McDonald S."/>
            <person name="McLean J."/>
            <person name="Mooney P."/>
            <person name="Moule S."/>
            <person name="Mungall K.L."/>
            <person name="Murphy L.D."/>
            <person name="Niblett D."/>
            <person name="Odell C."/>
            <person name="Oliver K."/>
            <person name="O'Neil S."/>
            <person name="Pearson D."/>
            <person name="Quail M.A."/>
            <person name="Rabbinowitsch E."/>
            <person name="Rutherford K.M."/>
            <person name="Rutter S."/>
            <person name="Saunders D."/>
            <person name="Seeger K."/>
            <person name="Sharp S."/>
            <person name="Skelton J."/>
            <person name="Simmonds M.N."/>
            <person name="Squares R."/>
            <person name="Squares S."/>
            <person name="Stevens K."/>
            <person name="Taylor K."/>
            <person name="Taylor R.G."/>
            <person name="Tivey A."/>
            <person name="Walsh S.V."/>
            <person name="Warren T."/>
            <person name="Whitehead S."/>
            <person name="Woodward J.R."/>
            <person name="Volckaert G."/>
            <person name="Aert R."/>
            <person name="Robben J."/>
            <person name="Grymonprez B."/>
            <person name="Weltjens I."/>
            <person name="Vanstreels E."/>
            <person name="Rieger M."/>
            <person name="Schaefer M."/>
            <person name="Mueller-Auer S."/>
            <person name="Gabel C."/>
            <person name="Fuchs M."/>
            <person name="Duesterhoeft A."/>
            <person name="Fritzc C."/>
            <person name="Holzer E."/>
            <person name="Moestl D."/>
            <person name="Hilbert H."/>
            <person name="Borzym K."/>
            <person name="Langer I."/>
            <person name="Beck A."/>
            <person name="Lehrach H."/>
            <person name="Reinhardt R."/>
            <person name="Pohl T.M."/>
            <person name="Eger P."/>
            <person name="Zimmermann W."/>
            <person name="Wedler H."/>
            <person name="Wambutt R."/>
            <person name="Purnelle B."/>
            <person name="Goffeau A."/>
            <person name="Cadieu E."/>
            <person name="Dreano S."/>
            <person name="Gloux S."/>
            <person name="Lelaure V."/>
            <person name="Mottier S."/>
            <person name="Galibert F."/>
            <person name="Aves S.J."/>
            <person name="Xiang Z."/>
            <person name="Hunt C."/>
            <person name="Moore K."/>
            <person name="Hurst S.M."/>
            <person name="Lucas M."/>
            <person name="Rochet M."/>
            <person name="Gaillardin C."/>
            <person name="Tallada V.A."/>
            <person name="Garzon A."/>
            <person name="Thode G."/>
            <person name="Daga R.R."/>
            <person name="Cruzado L."/>
            <person name="Jimenez J."/>
            <person name="Sanchez M."/>
            <person name="del Rey F."/>
            <person name="Benito J."/>
            <person name="Dominguez A."/>
            <person name="Revuelta J.L."/>
            <person name="Moreno S."/>
            <person name="Armstrong J."/>
            <person name="Forsburg S.L."/>
            <person name="Cerutti L."/>
            <person name="Lowe T."/>
            <person name="McCombie W.R."/>
            <person name="Paulsen I."/>
            <person name="Potashkin J."/>
            <person name="Shpakovski G.V."/>
            <person name="Ussery D."/>
            <person name="Barrell B.G."/>
            <person name="Nurse P."/>
        </authorList>
    </citation>
    <scope>NUCLEOTIDE SEQUENCE [LARGE SCALE GENOMIC DNA]</scope>
    <source>
        <strain>972 / ATCC 24843</strain>
    </source>
</reference>
<organism>
    <name type="scientific">Schizosaccharomyces pombe (strain 972 / ATCC 24843)</name>
    <name type="common">Fission yeast</name>
    <dbReference type="NCBI Taxonomy" id="284812"/>
    <lineage>
        <taxon>Eukaryota</taxon>
        <taxon>Fungi</taxon>
        <taxon>Dikarya</taxon>
        <taxon>Ascomycota</taxon>
        <taxon>Taphrinomycotina</taxon>
        <taxon>Schizosaccharomycetes</taxon>
        <taxon>Schizosaccharomycetales</taxon>
        <taxon>Schizosaccharomycetaceae</taxon>
        <taxon>Schizosaccharomyces</taxon>
    </lineage>
</organism>
<name>ERMP1_SCHPO</name>
<protein>
    <recommendedName>
        <fullName evidence="2">Putative endoplasmic reticulum metallopeptidase 1</fullName>
        <ecNumber evidence="5">3.4.-.-</ecNumber>
    </recommendedName>
    <alternativeName>
        <fullName evidence="5">FXNA-like protease</fullName>
    </alternativeName>
</protein>
<feature type="chain" id="PRO_0000372386" description="Putative endoplasmic reticulum metallopeptidase 1">
    <location>
        <begin position="1"/>
        <end position="822"/>
    </location>
</feature>
<feature type="topological domain" description="Cytoplasmic" evidence="5">
    <location>
        <begin position="1"/>
        <end position="14"/>
    </location>
</feature>
<feature type="transmembrane region" description="Helical; Name=1" evidence="3">
    <location>
        <begin position="15"/>
        <end position="35"/>
    </location>
</feature>
<feature type="topological domain" description="Lumenal" evidence="5">
    <location>
        <begin position="36"/>
        <end position="365"/>
    </location>
</feature>
<feature type="transmembrane region" description="Helical; Name=2" evidence="3">
    <location>
        <begin position="366"/>
        <end position="384"/>
    </location>
</feature>
<feature type="topological domain" description="Cytoplasmic" evidence="5">
    <location>
        <begin position="385"/>
        <end position="392"/>
    </location>
</feature>
<feature type="transmembrane region" description="Helical; Name=3" evidence="3">
    <location>
        <begin position="393"/>
        <end position="413"/>
    </location>
</feature>
<feature type="topological domain" description="Lumenal" evidence="5">
    <location>
        <begin position="414"/>
        <end position="431"/>
    </location>
</feature>
<feature type="transmembrane region" description="Helical; Name=4" evidence="3">
    <location>
        <begin position="432"/>
        <end position="452"/>
    </location>
</feature>
<feature type="topological domain" description="Cytoplasmic" evidence="5">
    <location>
        <begin position="453"/>
        <end position="463"/>
    </location>
</feature>
<feature type="transmembrane region" description="Helical; Name=5" evidence="3">
    <location>
        <begin position="464"/>
        <end position="484"/>
    </location>
</feature>
<feature type="topological domain" description="Lumenal" evidence="5">
    <location>
        <position position="485"/>
    </location>
</feature>
<feature type="transmembrane region" description="Helical; Name=6" evidence="3">
    <location>
        <begin position="486"/>
        <end position="506"/>
    </location>
</feature>
<feature type="topological domain" description="Cytoplasmic" evidence="5">
    <location>
        <begin position="507"/>
        <end position="514"/>
    </location>
</feature>
<feature type="transmembrane region" description="Helical; Name=7" evidence="3">
    <location>
        <begin position="515"/>
        <end position="535"/>
    </location>
</feature>
<feature type="topological domain" description="Lumenal" evidence="5">
    <location>
        <begin position="536"/>
        <end position="547"/>
    </location>
</feature>
<feature type="transmembrane region" description="Helical; Name=8" evidence="3">
    <location>
        <begin position="548"/>
        <end position="568"/>
    </location>
</feature>
<feature type="topological domain" description="Cytoplasmic" evidence="5">
    <location>
        <begin position="569"/>
        <end position="575"/>
    </location>
</feature>
<feature type="transmembrane region" description="Helical; Name=9" evidence="3">
    <location>
        <begin position="576"/>
        <end position="596"/>
    </location>
</feature>
<feature type="topological domain" description="Lumenal" evidence="5">
    <location>
        <begin position="597"/>
        <end position="822"/>
    </location>
</feature>
<feature type="active site" description="Proton acceptor" evidence="1">
    <location>
        <position position="207"/>
    </location>
</feature>
<feature type="binding site" evidence="1">
    <location>
        <position position="161"/>
    </location>
    <ligand>
        <name>Zn(2+)</name>
        <dbReference type="ChEBI" id="CHEBI:29105"/>
        <label>1</label>
        <note>catalytic</note>
    </ligand>
</feature>
<feature type="binding site" evidence="1">
    <location>
        <position position="173"/>
    </location>
    <ligand>
        <name>Zn(2+)</name>
        <dbReference type="ChEBI" id="CHEBI:29105"/>
        <label>1</label>
        <note>catalytic</note>
    </ligand>
</feature>
<feature type="binding site" evidence="1">
    <location>
        <position position="173"/>
    </location>
    <ligand>
        <name>Zn(2+)</name>
        <dbReference type="ChEBI" id="CHEBI:29105"/>
        <label>2</label>
        <note>catalytic</note>
    </ligand>
</feature>
<feature type="binding site" evidence="1">
    <location>
        <position position="208"/>
    </location>
    <ligand>
        <name>Zn(2+)</name>
        <dbReference type="ChEBI" id="CHEBI:29105"/>
        <label>2</label>
        <note>catalytic</note>
    </ligand>
</feature>
<feature type="binding site" evidence="1">
    <location>
        <position position="234"/>
    </location>
    <ligand>
        <name>Zn(2+)</name>
        <dbReference type="ChEBI" id="CHEBI:29105"/>
        <label>1</label>
        <note>catalytic</note>
    </ligand>
</feature>
<feature type="binding site" evidence="1">
    <location>
        <position position="307"/>
    </location>
    <ligand>
        <name>Zn(2+)</name>
        <dbReference type="ChEBI" id="CHEBI:29105"/>
        <label>2</label>
        <note>catalytic</note>
    </ligand>
</feature>
<feature type="site" description="Transition state stabilizer" evidence="1">
    <location>
        <position position="306"/>
    </location>
</feature>
<feature type="glycosylation site" description="N-linked (GlcNAc...) asparagine" evidence="4">
    <location>
        <position position="146"/>
    </location>
</feature>
<feature type="glycosylation site" description="N-linked (GlcNAc...) asparagine" evidence="4">
    <location>
        <position position="291"/>
    </location>
</feature>
<feature type="glycosylation site" description="N-linked (GlcNAc...) asparagine" evidence="4">
    <location>
        <position position="617"/>
    </location>
</feature>
<feature type="glycosylation site" description="N-linked (GlcNAc...) asparagine" evidence="4">
    <location>
        <position position="682"/>
    </location>
</feature>
<feature type="glycosylation site" description="N-linked (GlcNAc...) asparagine" evidence="4">
    <location>
        <position position="706"/>
    </location>
</feature>
<feature type="glycosylation site" description="N-linked (GlcNAc...) asparagine" evidence="4">
    <location>
        <position position="758"/>
    </location>
</feature>
<proteinExistence type="inferred from homology"/>
<dbReference type="EC" id="3.4.-.-" evidence="5"/>
<dbReference type="EMBL" id="CU329672">
    <property type="protein sequence ID" value="CAA22540.1"/>
    <property type="molecule type" value="Genomic_DNA"/>
</dbReference>
<dbReference type="PIR" id="T40891">
    <property type="entry name" value="T40891"/>
</dbReference>
<dbReference type="RefSeq" id="NP_588058.1">
    <property type="nucleotide sequence ID" value="NM_001023050.2"/>
</dbReference>
<dbReference type="SMR" id="O94702"/>
<dbReference type="BioGRID" id="275613">
    <property type="interactions" value="2"/>
</dbReference>
<dbReference type="FunCoup" id="O94702">
    <property type="interactions" value="50"/>
</dbReference>
<dbReference type="STRING" id="284812.O94702"/>
<dbReference type="GlyCosmos" id="O94702">
    <property type="glycosylation" value="6 sites, No reported glycans"/>
</dbReference>
<dbReference type="iPTMnet" id="O94702"/>
<dbReference type="SwissPalm" id="O94702"/>
<dbReference type="PaxDb" id="4896-SPCC1259.02c.1"/>
<dbReference type="EnsemblFungi" id="SPCC1259.02c.1">
    <property type="protein sequence ID" value="SPCC1259.02c.1:pep"/>
    <property type="gene ID" value="SPCC1259.02c"/>
</dbReference>
<dbReference type="PomBase" id="SPCC1259.02c">
    <property type="gene designation" value="erm1"/>
</dbReference>
<dbReference type="VEuPathDB" id="FungiDB:SPCC1259.02c"/>
<dbReference type="eggNOG" id="KOG2194">
    <property type="taxonomic scope" value="Eukaryota"/>
</dbReference>
<dbReference type="HOGENOM" id="CLU_015120_0_0_1"/>
<dbReference type="InParanoid" id="O94702"/>
<dbReference type="OMA" id="WNNTIGA"/>
<dbReference type="PhylomeDB" id="O94702"/>
<dbReference type="PRO" id="PR:O94702"/>
<dbReference type="Proteomes" id="UP000002485">
    <property type="component" value="Chromosome III"/>
</dbReference>
<dbReference type="GO" id="GO:0005789">
    <property type="term" value="C:endoplasmic reticulum membrane"/>
    <property type="evidence" value="ECO:0000250"/>
    <property type="project" value="PomBase"/>
</dbReference>
<dbReference type="GO" id="GO:0046872">
    <property type="term" value="F:metal ion binding"/>
    <property type="evidence" value="ECO:0007669"/>
    <property type="project" value="UniProtKB-KW"/>
</dbReference>
<dbReference type="GO" id="GO:0008235">
    <property type="term" value="F:metalloexopeptidase activity"/>
    <property type="evidence" value="ECO:0007669"/>
    <property type="project" value="InterPro"/>
</dbReference>
<dbReference type="GO" id="GO:0030968">
    <property type="term" value="P:endoplasmic reticulum unfolded protein response"/>
    <property type="evidence" value="ECO:0000266"/>
    <property type="project" value="PomBase"/>
</dbReference>
<dbReference type="GO" id="GO:0006508">
    <property type="term" value="P:proteolysis"/>
    <property type="evidence" value="ECO:0000318"/>
    <property type="project" value="GO_Central"/>
</dbReference>
<dbReference type="CDD" id="cd03875">
    <property type="entry name" value="M28_Fxna_like"/>
    <property type="match status" value="1"/>
</dbReference>
<dbReference type="FunFam" id="3.40.630.10:FF:000097">
    <property type="entry name" value="Peptide hydrolase"/>
    <property type="match status" value="1"/>
</dbReference>
<dbReference type="Gene3D" id="3.40.630.10">
    <property type="entry name" value="Zn peptidases"/>
    <property type="match status" value="1"/>
</dbReference>
<dbReference type="InterPro" id="IPR048024">
    <property type="entry name" value="Fxna-like_M28_dom"/>
</dbReference>
<dbReference type="InterPro" id="IPR045175">
    <property type="entry name" value="M28_fam"/>
</dbReference>
<dbReference type="InterPro" id="IPR007484">
    <property type="entry name" value="Peptidase_M28"/>
</dbReference>
<dbReference type="PANTHER" id="PTHR12147:SF22">
    <property type="entry name" value="ENDOPLASMIC RETICULUM METALLOPEPTIDASE 1"/>
    <property type="match status" value="1"/>
</dbReference>
<dbReference type="PANTHER" id="PTHR12147">
    <property type="entry name" value="METALLOPEPTIDASE M28 FAMILY MEMBER"/>
    <property type="match status" value="1"/>
</dbReference>
<dbReference type="Pfam" id="PF04389">
    <property type="entry name" value="Peptidase_M28"/>
    <property type="match status" value="1"/>
</dbReference>
<dbReference type="SUPFAM" id="SSF53187">
    <property type="entry name" value="Zn-dependent exopeptidases"/>
    <property type="match status" value="1"/>
</dbReference>
<evidence type="ECO:0000250" key="1">
    <source>
        <dbReference type="UniProtKB" id="P80561"/>
    </source>
</evidence>
<evidence type="ECO:0000250" key="2">
    <source>
        <dbReference type="UniProtKB" id="Q6UPR8"/>
    </source>
</evidence>
<evidence type="ECO:0000255" key="3"/>
<evidence type="ECO:0000255" key="4">
    <source>
        <dbReference type="PROSITE-ProRule" id="PRU00498"/>
    </source>
</evidence>
<evidence type="ECO:0000305" key="5"/>
<evidence type="ECO:0000312" key="6">
    <source>
        <dbReference type="PomBase" id="SPCC1259.02c"/>
    </source>
</evidence>